<sequence length="291" mass="30149">MTTLAIDIGGTKLAAALIDNNLRISQRRELPTPASKTPDALREALKALVEPLRAEARQVAIASTGIIQEGMLLALNPHNLGGLLHFPLIQTLETIAGLPTLAVNDAQAAAWAEYHALPDDIRDMVFITVSTGVGGGVVCDGKLLTGKGGLAGHLGHTLADPHGPVCGCGRVGCVEAIASGRGMAAAARDDLAGCDAKTLFIRAGEGHQQARHLVSQSAQVIARMIADVKATTDCQCVVIGGSVGLAEGYLEQVRAFLMQEPAPYHVALNAARYRHDAGLLGAALLAQGDTL</sequence>
<proteinExistence type="inferred from homology"/>
<keyword id="KW-0067">ATP-binding</keyword>
<keyword id="KW-0119">Carbohydrate metabolism</keyword>
<keyword id="KW-0418">Kinase</keyword>
<keyword id="KW-0479">Metal-binding</keyword>
<keyword id="KW-0547">Nucleotide-binding</keyword>
<keyword id="KW-0808">Transferase</keyword>
<keyword id="KW-0862">Zinc</keyword>
<protein>
    <recommendedName>
        <fullName evidence="1">N-acetylmannosamine kinase</fullName>
        <ecNumber evidence="1">2.7.1.60</ecNumber>
    </recommendedName>
    <alternativeName>
        <fullName evidence="1">ManNAc kinase</fullName>
    </alternativeName>
    <alternativeName>
        <fullName evidence="1">N-acetyl-D-mannosamine kinase</fullName>
    </alternativeName>
</protein>
<name>NANK_SALPB</name>
<comment type="function">
    <text evidence="1">Catalyzes the phosphorylation of N-acetylmannosamine (ManNAc) to ManNAc-6-P.</text>
</comment>
<comment type="catalytic activity">
    <reaction evidence="1">
        <text>an N-acyl-D-mannosamine + ATP = an N-acyl-D-mannosamine 6-phosphate + ADP + H(+)</text>
        <dbReference type="Rhea" id="RHEA:23832"/>
        <dbReference type="ChEBI" id="CHEBI:15378"/>
        <dbReference type="ChEBI" id="CHEBI:16062"/>
        <dbReference type="ChEBI" id="CHEBI:30616"/>
        <dbReference type="ChEBI" id="CHEBI:57666"/>
        <dbReference type="ChEBI" id="CHEBI:456216"/>
        <dbReference type="EC" id="2.7.1.60"/>
    </reaction>
</comment>
<comment type="pathway">
    <text evidence="1">Amino-sugar metabolism; N-acetylneuraminate degradation; D-fructose 6-phosphate from N-acetylneuraminate: step 2/5.</text>
</comment>
<comment type="subunit">
    <text evidence="1">Homodimer.</text>
</comment>
<comment type="similarity">
    <text evidence="1">Belongs to the ROK (NagC/XylR) family. NanK subfamily.</text>
</comment>
<feature type="chain" id="PRO_1000085726" description="N-acetylmannosamine kinase">
    <location>
        <begin position="1"/>
        <end position="291"/>
    </location>
</feature>
<feature type="binding site" evidence="1">
    <location>
        <begin position="5"/>
        <end position="12"/>
    </location>
    <ligand>
        <name>ATP</name>
        <dbReference type="ChEBI" id="CHEBI:30616"/>
    </ligand>
</feature>
<feature type="binding site" evidence="1">
    <location>
        <begin position="132"/>
        <end position="139"/>
    </location>
    <ligand>
        <name>ATP</name>
        <dbReference type="ChEBI" id="CHEBI:30616"/>
    </ligand>
</feature>
<feature type="binding site" evidence="1">
    <location>
        <position position="156"/>
    </location>
    <ligand>
        <name>Zn(2+)</name>
        <dbReference type="ChEBI" id="CHEBI:29105"/>
    </ligand>
</feature>
<feature type="binding site" evidence="1">
    <location>
        <position position="166"/>
    </location>
    <ligand>
        <name>Zn(2+)</name>
        <dbReference type="ChEBI" id="CHEBI:29105"/>
    </ligand>
</feature>
<feature type="binding site" evidence="1">
    <location>
        <position position="168"/>
    </location>
    <ligand>
        <name>Zn(2+)</name>
        <dbReference type="ChEBI" id="CHEBI:29105"/>
    </ligand>
</feature>
<feature type="binding site" evidence="1">
    <location>
        <position position="173"/>
    </location>
    <ligand>
        <name>Zn(2+)</name>
        <dbReference type="ChEBI" id="CHEBI:29105"/>
    </ligand>
</feature>
<gene>
    <name evidence="1" type="primary">nanK</name>
    <name type="ordered locus">SPAB_04160</name>
</gene>
<dbReference type="EC" id="2.7.1.60" evidence="1"/>
<dbReference type="EMBL" id="CP000886">
    <property type="protein sequence ID" value="ABX69483.1"/>
    <property type="molecule type" value="Genomic_DNA"/>
</dbReference>
<dbReference type="RefSeq" id="WP_000208975.1">
    <property type="nucleotide sequence ID" value="NC_010102.1"/>
</dbReference>
<dbReference type="SMR" id="A9N830"/>
<dbReference type="KEGG" id="spq:SPAB_04160"/>
<dbReference type="PATRIC" id="fig|1016998.12.peg.3917"/>
<dbReference type="HOGENOM" id="CLU_036604_0_4_6"/>
<dbReference type="BioCyc" id="SENT1016998:SPAB_RS16910-MONOMER"/>
<dbReference type="UniPathway" id="UPA00629">
    <property type="reaction ID" value="UER00681"/>
</dbReference>
<dbReference type="Proteomes" id="UP000008556">
    <property type="component" value="Chromosome"/>
</dbReference>
<dbReference type="GO" id="GO:0005524">
    <property type="term" value="F:ATP binding"/>
    <property type="evidence" value="ECO:0007669"/>
    <property type="project" value="UniProtKB-UniRule"/>
</dbReference>
<dbReference type="GO" id="GO:0009384">
    <property type="term" value="F:N-acylmannosamine kinase activity"/>
    <property type="evidence" value="ECO:0007669"/>
    <property type="project" value="UniProtKB-UniRule"/>
</dbReference>
<dbReference type="GO" id="GO:0008270">
    <property type="term" value="F:zinc ion binding"/>
    <property type="evidence" value="ECO:0007669"/>
    <property type="project" value="UniProtKB-UniRule"/>
</dbReference>
<dbReference type="GO" id="GO:0019262">
    <property type="term" value="P:N-acetylneuraminate catabolic process"/>
    <property type="evidence" value="ECO:0007669"/>
    <property type="project" value="UniProtKB-UniRule"/>
</dbReference>
<dbReference type="FunFam" id="3.30.420.40:FF:000062">
    <property type="entry name" value="N-acetylmannosamine kinase"/>
    <property type="match status" value="1"/>
</dbReference>
<dbReference type="FunFam" id="3.30.420.40:FF:000063">
    <property type="entry name" value="N-acetylmannosamine kinase"/>
    <property type="match status" value="1"/>
</dbReference>
<dbReference type="Gene3D" id="3.30.420.40">
    <property type="match status" value="2"/>
</dbReference>
<dbReference type="HAMAP" id="MF_01234">
    <property type="entry name" value="ManNAc_kinase"/>
    <property type="match status" value="1"/>
</dbReference>
<dbReference type="InterPro" id="IPR043129">
    <property type="entry name" value="ATPase_NBD"/>
</dbReference>
<dbReference type="InterPro" id="IPR023945">
    <property type="entry name" value="ManNAc_kinase_bac"/>
</dbReference>
<dbReference type="InterPro" id="IPR000600">
    <property type="entry name" value="ROK"/>
</dbReference>
<dbReference type="InterPro" id="IPR049874">
    <property type="entry name" value="ROK_cs"/>
</dbReference>
<dbReference type="NCBIfam" id="NF047821">
    <property type="entry name" value="NactlManKinNanK"/>
    <property type="match status" value="1"/>
</dbReference>
<dbReference type="NCBIfam" id="NF003461">
    <property type="entry name" value="PRK05082.1"/>
    <property type="match status" value="1"/>
</dbReference>
<dbReference type="PANTHER" id="PTHR18964:SF169">
    <property type="entry name" value="N-ACETYLMANNOSAMINE KINASE"/>
    <property type="match status" value="1"/>
</dbReference>
<dbReference type="PANTHER" id="PTHR18964">
    <property type="entry name" value="ROK (REPRESSOR, ORF, KINASE) FAMILY"/>
    <property type="match status" value="1"/>
</dbReference>
<dbReference type="Pfam" id="PF00480">
    <property type="entry name" value="ROK"/>
    <property type="match status" value="1"/>
</dbReference>
<dbReference type="SUPFAM" id="SSF53067">
    <property type="entry name" value="Actin-like ATPase domain"/>
    <property type="match status" value="1"/>
</dbReference>
<dbReference type="PROSITE" id="PS01125">
    <property type="entry name" value="ROK"/>
    <property type="match status" value="1"/>
</dbReference>
<evidence type="ECO:0000255" key="1">
    <source>
        <dbReference type="HAMAP-Rule" id="MF_01234"/>
    </source>
</evidence>
<reference key="1">
    <citation type="submission" date="2007-11" db="EMBL/GenBank/DDBJ databases">
        <authorList>
            <consortium name="The Salmonella enterica serovar Paratyphi B Genome Sequencing Project"/>
            <person name="McClelland M."/>
            <person name="Sanderson E.K."/>
            <person name="Porwollik S."/>
            <person name="Spieth J."/>
            <person name="Clifton W.S."/>
            <person name="Fulton R."/>
            <person name="Cordes M."/>
            <person name="Wollam A."/>
            <person name="Shah N."/>
            <person name="Pepin K."/>
            <person name="Bhonagiri V."/>
            <person name="Nash W."/>
            <person name="Johnson M."/>
            <person name="Thiruvilangam P."/>
            <person name="Wilson R."/>
        </authorList>
    </citation>
    <scope>NUCLEOTIDE SEQUENCE [LARGE SCALE GENOMIC DNA]</scope>
    <source>
        <strain>ATCC BAA-1250 / SPB7</strain>
    </source>
</reference>
<organism>
    <name type="scientific">Salmonella paratyphi B (strain ATCC BAA-1250 / SPB7)</name>
    <dbReference type="NCBI Taxonomy" id="1016998"/>
    <lineage>
        <taxon>Bacteria</taxon>
        <taxon>Pseudomonadati</taxon>
        <taxon>Pseudomonadota</taxon>
        <taxon>Gammaproteobacteria</taxon>
        <taxon>Enterobacterales</taxon>
        <taxon>Enterobacteriaceae</taxon>
        <taxon>Salmonella</taxon>
    </lineage>
</organism>
<accession>A9N830</accession>